<feature type="signal peptide" evidence="1">
    <location>
        <begin position="1"/>
        <end position="26"/>
    </location>
</feature>
<feature type="chain" id="PRO_0000353959" description="Membrane-bound lytic murein transglycosylase F">
    <location>
        <begin position="27"/>
        <end position="486"/>
    </location>
</feature>
<feature type="region of interest" description="Non-LT domain" evidence="1">
    <location>
        <begin position="27"/>
        <end position="267"/>
    </location>
</feature>
<feature type="region of interest" description="LT domain" evidence="1">
    <location>
        <begin position="268"/>
        <end position="486"/>
    </location>
</feature>
<feature type="region of interest" description="Disordered" evidence="2">
    <location>
        <begin position="464"/>
        <end position="486"/>
    </location>
</feature>
<feature type="active site" evidence="1">
    <location>
        <position position="314"/>
    </location>
</feature>
<proteinExistence type="inferred from homology"/>
<reference key="1">
    <citation type="journal article" date="2005" name="Nat. Biotechnol.">
        <title>Complete genome sequence of the plant commensal Pseudomonas fluorescens Pf-5.</title>
        <authorList>
            <person name="Paulsen I.T."/>
            <person name="Press C.M."/>
            <person name="Ravel J."/>
            <person name="Kobayashi D.Y."/>
            <person name="Myers G.S.A."/>
            <person name="Mavrodi D.V."/>
            <person name="DeBoy R.T."/>
            <person name="Seshadri R."/>
            <person name="Ren Q."/>
            <person name="Madupu R."/>
            <person name="Dodson R.J."/>
            <person name="Durkin A.S."/>
            <person name="Brinkac L.M."/>
            <person name="Daugherty S.C."/>
            <person name="Sullivan S.A."/>
            <person name="Rosovitz M.J."/>
            <person name="Gwinn M.L."/>
            <person name="Zhou L."/>
            <person name="Schneider D.J."/>
            <person name="Cartinhour S.W."/>
            <person name="Nelson W.C."/>
            <person name="Weidman J."/>
            <person name="Watkins K."/>
            <person name="Tran K."/>
            <person name="Khouri H."/>
            <person name="Pierson E.A."/>
            <person name="Pierson L.S. III"/>
            <person name="Thomashow L.S."/>
            <person name="Loper J.E."/>
        </authorList>
    </citation>
    <scope>NUCLEOTIDE SEQUENCE [LARGE SCALE GENOMIC DNA]</scope>
    <source>
        <strain>ATCC BAA-477 / NRRL B-23932 / Pf-5</strain>
    </source>
</reference>
<name>MLTF_PSEF5</name>
<accession>Q4KHS7</accession>
<gene>
    <name evidence="1" type="primary">mltF</name>
    <name type="ordered locus">PFL_1075</name>
</gene>
<keyword id="KW-0998">Cell outer membrane</keyword>
<keyword id="KW-0961">Cell wall biogenesis/degradation</keyword>
<keyword id="KW-0456">Lyase</keyword>
<keyword id="KW-0472">Membrane</keyword>
<keyword id="KW-0732">Signal</keyword>
<organism>
    <name type="scientific">Pseudomonas fluorescens (strain ATCC BAA-477 / NRRL B-23932 / Pf-5)</name>
    <dbReference type="NCBI Taxonomy" id="220664"/>
    <lineage>
        <taxon>Bacteria</taxon>
        <taxon>Pseudomonadati</taxon>
        <taxon>Pseudomonadota</taxon>
        <taxon>Gammaproteobacteria</taxon>
        <taxon>Pseudomonadales</taxon>
        <taxon>Pseudomonadaceae</taxon>
        <taxon>Pseudomonas</taxon>
    </lineage>
</organism>
<sequence>MFSPMALRPRCAKWLIVTGLFLMLGACVEKPSTLERVKEDGVLRVVTRNSPATYFQDRNGETGFEYELVKRFADDLGVELKIETADNLDDLFDQLGQPKGPVLAAAGLVSSEQRKQQVRFSHPYLEVTPQVIYRNGRSRPTTAQDLVGKHIMVLKGSTHAEQLAELKLKYPGIEYEESDAVEVVDLLRMVDEGQIDLTLVDSNELAMNQVYFPNVRVAFDLGDARSQSWAVAAGDDNSLLNEINSFLDKVEKNGTLQRLKDRYYGHVDVLGYVGAYTFAQHLQQRLPKYEKHFKASAKQEKLDWRLLAAVGYQESMWQAEVTSKTGVRGLMMLTQNTAQAMGVSNRLDPKQSISGGAKYLAYIKEQLDDKIEEPDRTWFALAAYNVGTGHLDDARKLAEKEGLNPNKWLDVKKMLPRLSQKQWYSKTRYGYARGGEPVHFVANIRRYYDILTWVTQPQLEGDQVAEGNLHVPGVNKTKPPEENPPL</sequence>
<dbReference type="EC" id="4.2.2.n1" evidence="1"/>
<dbReference type="EMBL" id="CP000076">
    <property type="protein sequence ID" value="AAY90362.2"/>
    <property type="molecule type" value="Genomic_DNA"/>
</dbReference>
<dbReference type="RefSeq" id="WP_011059425.1">
    <property type="nucleotide sequence ID" value="NC_004129.6"/>
</dbReference>
<dbReference type="SMR" id="Q4KHS7"/>
<dbReference type="STRING" id="220664.PFL_1075"/>
<dbReference type="CAZy" id="GH23">
    <property type="family name" value="Glycoside Hydrolase Family 23"/>
</dbReference>
<dbReference type="DNASU" id="3477486"/>
<dbReference type="GeneID" id="57474079"/>
<dbReference type="KEGG" id="pfl:PFL_1075"/>
<dbReference type="PATRIC" id="fig|220664.5.peg.1103"/>
<dbReference type="eggNOG" id="COG4623">
    <property type="taxonomic scope" value="Bacteria"/>
</dbReference>
<dbReference type="HOGENOM" id="CLU_027494_0_1_6"/>
<dbReference type="Proteomes" id="UP000008540">
    <property type="component" value="Chromosome"/>
</dbReference>
<dbReference type="GO" id="GO:0009279">
    <property type="term" value="C:cell outer membrane"/>
    <property type="evidence" value="ECO:0007669"/>
    <property type="project" value="UniProtKB-SubCell"/>
</dbReference>
<dbReference type="GO" id="GO:0008933">
    <property type="term" value="F:peptidoglycan lytic transglycosylase activity"/>
    <property type="evidence" value="ECO:0007669"/>
    <property type="project" value="UniProtKB-UniRule"/>
</dbReference>
<dbReference type="GO" id="GO:0016998">
    <property type="term" value="P:cell wall macromolecule catabolic process"/>
    <property type="evidence" value="ECO:0007669"/>
    <property type="project" value="UniProtKB-UniRule"/>
</dbReference>
<dbReference type="GO" id="GO:0071555">
    <property type="term" value="P:cell wall organization"/>
    <property type="evidence" value="ECO:0007669"/>
    <property type="project" value="UniProtKB-KW"/>
</dbReference>
<dbReference type="GO" id="GO:0009253">
    <property type="term" value="P:peptidoglycan catabolic process"/>
    <property type="evidence" value="ECO:0007669"/>
    <property type="project" value="TreeGrafter"/>
</dbReference>
<dbReference type="CDD" id="cd13403">
    <property type="entry name" value="MLTF-like"/>
    <property type="match status" value="1"/>
</dbReference>
<dbReference type="CDD" id="cd01009">
    <property type="entry name" value="PBP2_YfhD_N"/>
    <property type="match status" value="1"/>
</dbReference>
<dbReference type="Gene3D" id="1.10.530.10">
    <property type="match status" value="1"/>
</dbReference>
<dbReference type="Gene3D" id="3.40.190.10">
    <property type="entry name" value="Periplasmic binding protein-like II"/>
    <property type="match status" value="2"/>
</dbReference>
<dbReference type="HAMAP" id="MF_02016">
    <property type="entry name" value="MltF"/>
    <property type="match status" value="1"/>
</dbReference>
<dbReference type="InterPro" id="IPR023346">
    <property type="entry name" value="Lysozyme-like_dom_sf"/>
</dbReference>
<dbReference type="InterPro" id="IPR023703">
    <property type="entry name" value="MltF"/>
</dbReference>
<dbReference type="InterPro" id="IPR001638">
    <property type="entry name" value="Solute-binding_3/MltF_N"/>
</dbReference>
<dbReference type="InterPro" id="IPR000189">
    <property type="entry name" value="Transglyc_AS"/>
</dbReference>
<dbReference type="InterPro" id="IPR008258">
    <property type="entry name" value="Transglycosylase_SLT_dom_1"/>
</dbReference>
<dbReference type="NCBIfam" id="NF008112">
    <property type="entry name" value="PRK10859.1"/>
    <property type="match status" value="1"/>
</dbReference>
<dbReference type="PANTHER" id="PTHR35936">
    <property type="entry name" value="MEMBRANE-BOUND LYTIC MUREIN TRANSGLYCOSYLASE F"/>
    <property type="match status" value="1"/>
</dbReference>
<dbReference type="PANTHER" id="PTHR35936:SF32">
    <property type="entry name" value="MEMBRANE-BOUND LYTIC MUREIN TRANSGLYCOSYLASE F"/>
    <property type="match status" value="1"/>
</dbReference>
<dbReference type="Pfam" id="PF00497">
    <property type="entry name" value="SBP_bac_3"/>
    <property type="match status" value="1"/>
</dbReference>
<dbReference type="Pfam" id="PF01464">
    <property type="entry name" value="SLT"/>
    <property type="match status" value="1"/>
</dbReference>
<dbReference type="SMART" id="SM00062">
    <property type="entry name" value="PBPb"/>
    <property type="match status" value="1"/>
</dbReference>
<dbReference type="SUPFAM" id="SSF53955">
    <property type="entry name" value="Lysozyme-like"/>
    <property type="match status" value="1"/>
</dbReference>
<dbReference type="SUPFAM" id="SSF53850">
    <property type="entry name" value="Periplasmic binding protein-like II"/>
    <property type="match status" value="1"/>
</dbReference>
<dbReference type="PROSITE" id="PS00922">
    <property type="entry name" value="TRANSGLYCOSYLASE"/>
    <property type="match status" value="1"/>
</dbReference>
<comment type="function">
    <text evidence="1">Murein-degrading enzyme that degrades murein glycan strands and insoluble, high-molecular weight murein sacculi, with the concomitant formation of a 1,6-anhydromuramoyl product. Lytic transglycosylases (LTs) play an integral role in the metabolism of the peptidoglycan (PG) sacculus. Their lytic action creates space within the PG sacculus to allow for its expansion as well as for the insertion of various structures such as secretion systems and flagella.</text>
</comment>
<comment type="catalytic activity">
    <reaction evidence="1">
        <text>Exolytic cleavage of the (1-&gt;4)-beta-glycosidic linkage between N-acetylmuramic acid (MurNAc) and N-acetylglucosamine (GlcNAc) residues in peptidoglycan, from either the reducing or the non-reducing ends of the peptidoglycan chains, with concomitant formation of a 1,6-anhydrobond in the MurNAc residue.</text>
        <dbReference type="EC" id="4.2.2.n1"/>
    </reaction>
</comment>
<comment type="subcellular location">
    <subcellularLocation>
        <location>Cell outer membrane</location>
        <topology>Peripheral membrane protein</topology>
    </subcellularLocation>
    <text evidence="1">Attached to the inner leaflet of the outer membrane.</text>
</comment>
<comment type="domain">
    <text evidence="1">The N-terminal domain does not have lytic activity and probably modulates enzymatic activity. The C-terminal domain is the catalytic active domain.</text>
</comment>
<comment type="similarity">
    <text evidence="1">In the N-terminal section; belongs to the bacterial solute-binding protein 3 family.</text>
</comment>
<comment type="similarity">
    <text evidence="1">In the C-terminal section; belongs to the transglycosylase Slt family.</text>
</comment>
<protein>
    <recommendedName>
        <fullName evidence="1">Membrane-bound lytic murein transglycosylase F</fullName>
        <ecNumber evidence="1">4.2.2.n1</ecNumber>
    </recommendedName>
    <alternativeName>
        <fullName evidence="1">Murein lyase F</fullName>
    </alternativeName>
</protein>
<evidence type="ECO:0000255" key="1">
    <source>
        <dbReference type="HAMAP-Rule" id="MF_02016"/>
    </source>
</evidence>
<evidence type="ECO:0000256" key="2">
    <source>
        <dbReference type="SAM" id="MobiDB-lite"/>
    </source>
</evidence>